<accession>Q0SRG2</accession>
<protein>
    <recommendedName>
        <fullName evidence="1">DNA repair protein RecO</fullName>
    </recommendedName>
    <alternativeName>
        <fullName evidence="1">Recombination protein O</fullName>
    </alternativeName>
</protein>
<comment type="function">
    <text evidence="1">Involved in DNA repair and RecF pathway recombination.</text>
</comment>
<comment type="similarity">
    <text evidence="1">Belongs to the RecO family.</text>
</comment>
<keyword id="KW-0227">DNA damage</keyword>
<keyword id="KW-0233">DNA recombination</keyword>
<keyword id="KW-0234">DNA repair</keyword>
<feature type="chain" id="PRO_0000264813" description="DNA repair protein RecO">
    <location>
        <begin position="1"/>
        <end position="225"/>
    </location>
</feature>
<sequence length="225" mass="26127">MLWIFTEKMGKITAIAKGAKKSKSKLFSLTHPLCYGDYLLFKGKGLYRLSEGKIRTSFQTSLTDLEKLTYASYLCELIDISLQDEEENFNLYKEFITCLYLINTEAISYELLIRAFELKLLKYTGYGLRFDNCVFCKNKLSVSNYISLRYFGGVCDKCPKEHGLYINKATYNALRFLNNTSLDKVYRLTLTEEVKAELFKVTSFIISSVYSRKPKSLEMLKFIKE</sequence>
<proteinExistence type="inferred from homology"/>
<gene>
    <name evidence="1" type="primary">recO</name>
    <name type="ordered locus">CPR_1986</name>
</gene>
<organism>
    <name type="scientific">Clostridium perfringens (strain SM101 / Type A)</name>
    <dbReference type="NCBI Taxonomy" id="289380"/>
    <lineage>
        <taxon>Bacteria</taxon>
        <taxon>Bacillati</taxon>
        <taxon>Bacillota</taxon>
        <taxon>Clostridia</taxon>
        <taxon>Eubacteriales</taxon>
        <taxon>Clostridiaceae</taxon>
        <taxon>Clostridium</taxon>
    </lineage>
</organism>
<name>RECO_CLOPS</name>
<dbReference type="EMBL" id="CP000312">
    <property type="protein sequence ID" value="ABG87423.1"/>
    <property type="molecule type" value="Genomic_DNA"/>
</dbReference>
<dbReference type="SMR" id="Q0SRG2"/>
<dbReference type="KEGG" id="cpr:CPR_1986"/>
<dbReference type="Proteomes" id="UP000001824">
    <property type="component" value="Chromosome"/>
</dbReference>
<dbReference type="GO" id="GO:0043590">
    <property type="term" value="C:bacterial nucleoid"/>
    <property type="evidence" value="ECO:0007669"/>
    <property type="project" value="TreeGrafter"/>
</dbReference>
<dbReference type="GO" id="GO:0006310">
    <property type="term" value="P:DNA recombination"/>
    <property type="evidence" value="ECO:0007669"/>
    <property type="project" value="UniProtKB-UniRule"/>
</dbReference>
<dbReference type="GO" id="GO:0006302">
    <property type="term" value="P:double-strand break repair"/>
    <property type="evidence" value="ECO:0007669"/>
    <property type="project" value="TreeGrafter"/>
</dbReference>
<dbReference type="Gene3D" id="2.40.50.140">
    <property type="entry name" value="Nucleic acid-binding proteins"/>
    <property type="match status" value="1"/>
</dbReference>
<dbReference type="Gene3D" id="1.20.1440.120">
    <property type="entry name" value="Recombination protein O, C-terminal domain"/>
    <property type="match status" value="1"/>
</dbReference>
<dbReference type="HAMAP" id="MF_00201">
    <property type="entry name" value="RecO"/>
    <property type="match status" value="1"/>
</dbReference>
<dbReference type="InterPro" id="IPR037278">
    <property type="entry name" value="ARFGAP/RecO"/>
</dbReference>
<dbReference type="InterPro" id="IPR022572">
    <property type="entry name" value="DNA_rep/recomb_RecO_N"/>
</dbReference>
<dbReference type="InterPro" id="IPR012340">
    <property type="entry name" value="NA-bd_OB-fold"/>
</dbReference>
<dbReference type="InterPro" id="IPR003717">
    <property type="entry name" value="RecO"/>
</dbReference>
<dbReference type="InterPro" id="IPR042242">
    <property type="entry name" value="RecO_C"/>
</dbReference>
<dbReference type="NCBIfam" id="TIGR00613">
    <property type="entry name" value="reco"/>
    <property type="match status" value="1"/>
</dbReference>
<dbReference type="PANTHER" id="PTHR33991">
    <property type="entry name" value="DNA REPAIR PROTEIN RECO"/>
    <property type="match status" value="1"/>
</dbReference>
<dbReference type="PANTHER" id="PTHR33991:SF1">
    <property type="entry name" value="DNA REPAIR PROTEIN RECO"/>
    <property type="match status" value="1"/>
</dbReference>
<dbReference type="Pfam" id="PF02565">
    <property type="entry name" value="RecO_C"/>
    <property type="match status" value="1"/>
</dbReference>
<dbReference type="Pfam" id="PF11967">
    <property type="entry name" value="RecO_N"/>
    <property type="match status" value="1"/>
</dbReference>
<dbReference type="SUPFAM" id="SSF57863">
    <property type="entry name" value="ArfGap/RecO-like zinc finger"/>
    <property type="match status" value="1"/>
</dbReference>
<dbReference type="SUPFAM" id="SSF50249">
    <property type="entry name" value="Nucleic acid-binding proteins"/>
    <property type="match status" value="1"/>
</dbReference>
<reference key="1">
    <citation type="journal article" date="2006" name="Genome Res.">
        <title>Skewed genomic variability in strains of the toxigenic bacterial pathogen, Clostridium perfringens.</title>
        <authorList>
            <person name="Myers G.S.A."/>
            <person name="Rasko D.A."/>
            <person name="Cheung J.K."/>
            <person name="Ravel J."/>
            <person name="Seshadri R."/>
            <person name="DeBoy R.T."/>
            <person name="Ren Q."/>
            <person name="Varga J."/>
            <person name="Awad M.M."/>
            <person name="Brinkac L.M."/>
            <person name="Daugherty S.C."/>
            <person name="Haft D.H."/>
            <person name="Dodson R.J."/>
            <person name="Madupu R."/>
            <person name="Nelson W.C."/>
            <person name="Rosovitz M.J."/>
            <person name="Sullivan S.A."/>
            <person name="Khouri H."/>
            <person name="Dimitrov G.I."/>
            <person name="Watkins K.L."/>
            <person name="Mulligan S."/>
            <person name="Benton J."/>
            <person name="Radune D."/>
            <person name="Fisher D.J."/>
            <person name="Atkins H.S."/>
            <person name="Hiscox T."/>
            <person name="Jost B.H."/>
            <person name="Billington S.J."/>
            <person name="Songer J.G."/>
            <person name="McClane B.A."/>
            <person name="Titball R.W."/>
            <person name="Rood J.I."/>
            <person name="Melville S.B."/>
            <person name="Paulsen I.T."/>
        </authorList>
    </citation>
    <scope>NUCLEOTIDE SEQUENCE [LARGE SCALE GENOMIC DNA]</scope>
    <source>
        <strain>SM101 / Type A</strain>
    </source>
</reference>
<evidence type="ECO:0000255" key="1">
    <source>
        <dbReference type="HAMAP-Rule" id="MF_00201"/>
    </source>
</evidence>